<keyword id="KW-0067">ATP-binding</keyword>
<keyword id="KW-0418">Kinase</keyword>
<keyword id="KW-0547">Nucleotide-binding</keyword>
<keyword id="KW-0614">Plasmid</keyword>
<keyword id="KW-1277">Toxin-antitoxin system</keyword>
<keyword id="KW-0808">Transferase</keyword>
<sequence length="286" mass="32421">MRLHKIFYALFENRLSDNLEELVQGKKAVESPTAFLLGGQPGSGKTSLRSAIFEETQGNVIVIDNDTFKQQHPNFDELVKLYEKDVVKHVTPYSNRMTEAIISRLSDKGYNLVIEGTGRTTDVPIQTATMLQAKGYETKMYVMAVPKINSYLGTIERYETMYADDPMTARATPKQAHDIAVKNLPTNLETLHKTGLFSDIRLYNREGVKLYSSLETPSISPKETLERELNRKISGKEIQPTLERIEQKMVQNQHQETPEFKAIQQKMESLQPPTPPIPKTPKLPGI</sequence>
<evidence type="ECO:0000250" key="1"/>
<evidence type="ECO:0000250" key="2">
    <source>
        <dbReference type="UniProtKB" id="Q97QZ1"/>
    </source>
</evidence>
<evidence type="ECO:0000256" key="3">
    <source>
        <dbReference type="SAM" id="MobiDB-lite"/>
    </source>
</evidence>
<evidence type="ECO:0000305" key="4"/>
<comment type="function">
    <text evidence="1">Toxic component of a type II toxin-antitoxin (TA) system. Phosphorylates UDP-N-acetyl-D-glucosamine (UNAG) on the 3'-hydroxyl group of the N-acetyl-D-glucosamine moiety, yielding UNAG-3P. UNAG-3P inhibits MurA, the first committed step in cell wall synthesis, which is then blocked. Phosphorylation is inhibited by cognate epsilon antitoxin. Part of a postsegregational killing (PSK) system involved in the killing of plasmid-free cells. The zeta toxin induces programmed cell death (By similarity).</text>
</comment>
<comment type="catalytic activity">
    <reaction>
        <text>UDP-N-acetyl-alpha-D-glucosamine + ATP = UDP-N-acetyl-alpha-D-glucosamine 3'-phosphate + ADP + H(+)</text>
        <dbReference type="Rhea" id="RHEA:32671"/>
        <dbReference type="ChEBI" id="CHEBI:15378"/>
        <dbReference type="ChEBI" id="CHEBI:30616"/>
        <dbReference type="ChEBI" id="CHEBI:57705"/>
        <dbReference type="ChEBI" id="CHEBI:64353"/>
        <dbReference type="ChEBI" id="CHEBI:456216"/>
        <dbReference type="EC" id="2.7.1.176"/>
    </reaction>
</comment>
<comment type="subunit">
    <text evidence="1">In the presence of the epsilon antitoxin, forms an inactive PezA(2)PezT(2) heterotetramer.</text>
</comment>
<comment type="similarity">
    <text evidence="4">Belongs to the zeta toxin family.</text>
</comment>
<feature type="chain" id="PRO_0000221552" description="Toxin zeta">
    <location>
        <begin position="1"/>
        <end position="286"/>
    </location>
</feature>
<feature type="region of interest" description="Disordered" evidence="3">
    <location>
        <begin position="249"/>
        <end position="286"/>
    </location>
</feature>
<feature type="compositionally biased region" description="Pro residues" evidence="3">
    <location>
        <begin position="272"/>
        <end position="286"/>
    </location>
</feature>
<feature type="binding site" evidence="2">
    <location>
        <begin position="39"/>
        <end position="46"/>
    </location>
    <ligand>
        <name>ATP</name>
        <dbReference type="ChEBI" id="CHEBI:30616"/>
    </ligand>
</feature>
<accession>Q93CM1</accession>
<proteinExistence type="inferred from homology"/>
<dbReference type="EC" id="2.7.1.176"/>
<dbReference type="EMBL" id="AF406971">
    <property type="protein sequence ID" value="AAK96239.1"/>
    <property type="molecule type" value="Genomic_DNA"/>
</dbReference>
<dbReference type="SMR" id="Q93CM1"/>
<dbReference type="GO" id="GO:0005524">
    <property type="term" value="F:ATP binding"/>
    <property type="evidence" value="ECO:0007669"/>
    <property type="project" value="UniProtKB-KW"/>
</dbReference>
<dbReference type="GO" id="GO:0016301">
    <property type="term" value="F:kinase activity"/>
    <property type="evidence" value="ECO:0007669"/>
    <property type="project" value="UniProtKB-KW"/>
</dbReference>
<dbReference type="Gene3D" id="3.40.50.300">
    <property type="entry name" value="P-loop containing nucleotide triphosphate hydrolases"/>
    <property type="match status" value="1"/>
</dbReference>
<dbReference type="InterPro" id="IPR027417">
    <property type="entry name" value="P-loop_NTPase"/>
</dbReference>
<dbReference type="InterPro" id="IPR010488">
    <property type="entry name" value="Zeta_toxin_domain"/>
</dbReference>
<dbReference type="Pfam" id="PF06414">
    <property type="entry name" value="Zeta_toxin"/>
    <property type="match status" value="1"/>
</dbReference>
<dbReference type="SUPFAM" id="SSF52540">
    <property type="entry name" value="P-loop containing nucleoside triphosphate hydrolases"/>
    <property type="match status" value="1"/>
</dbReference>
<name>ZTOX_ENTHR</name>
<organism>
    <name type="scientific">Enterococcus hirae</name>
    <dbReference type="NCBI Taxonomy" id="1354"/>
    <lineage>
        <taxon>Bacteria</taxon>
        <taxon>Bacillati</taxon>
        <taxon>Bacillota</taxon>
        <taxon>Bacilli</taxon>
        <taxon>Lactobacillales</taxon>
        <taxon>Enterococcaceae</taxon>
        <taxon>Enterococcus</taxon>
    </lineage>
</organism>
<reference key="1">
    <citation type="journal article" date="2002" name="Int. J. Med. Microbiol.">
        <title>Molecular analysis of streptogramin resistance in enterococci.</title>
        <authorList>
            <person name="Werner G."/>
            <person name="Klare I."/>
            <person name="Witte W."/>
        </authorList>
    </citation>
    <scope>NUCLEOTIDE SEQUENCE [GENOMIC DNA]</scope>
</reference>
<protein>
    <recommendedName>
        <fullName>Toxin zeta</fullName>
    </recommendedName>
    <alternativeName>
        <fullName>UDP-N-acetylglucosamine kinase</fullName>
        <shortName>UNAG kinase</shortName>
        <ecNumber>2.7.1.176</ecNumber>
    </alternativeName>
</protein>